<feature type="chain" id="PRO_1000052836" description="Large ribosomal subunit protein uL5">
    <location>
        <begin position="1"/>
        <end position="179"/>
    </location>
</feature>
<protein>
    <recommendedName>
        <fullName evidence="1">Large ribosomal subunit protein uL5</fullName>
    </recommendedName>
    <alternativeName>
        <fullName evidence="2">50S ribosomal protein L5</fullName>
    </alternativeName>
</protein>
<gene>
    <name evidence="1" type="primary">rplE</name>
    <name type="ordered locus">SAHV_2222</name>
</gene>
<evidence type="ECO:0000255" key="1">
    <source>
        <dbReference type="HAMAP-Rule" id="MF_01333"/>
    </source>
</evidence>
<evidence type="ECO:0000305" key="2"/>
<comment type="function">
    <text evidence="1">This is one of the proteins that bind and probably mediate the attachment of the 5S RNA into the large ribosomal subunit, where it forms part of the central protuberance. In the 70S ribosome it contacts protein S13 of the 30S subunit (bridge B1b), connecting the 2 subunits; this bridge is implicated in subunit movement. Contacts the P site tRNA; the 5S rRNA and some of its associated proteins might help stabilize positioning of ribosome-bound tRNAs.</text>
</comment>
<comment type="subunit">
    <text evidence="1">Part of the 50S ribosomal subunit; part of the 5S rRNA/L5/L18/L25 subcomplex. Contacts the 5S rRNA and the P site tRNA. Forms a bridge to the 30S subunit in the 70S ribosome.</text>
</comment>
<comment type="similarity">
    <text evidence="1">Belongs to the universal ribosomal protein uL5 family.</text>
</comment>
<sequence length="179" mass="20267">MNRLKEKFNTEVTENLMKKFNYSSVMEVPKIDKIVVNMGVGDAVQNSKVLDNAVEELELITGQKPLVTKAKKSIATFRLREGMPIGAKVTLRGERMYEFLDKLISVSLPRVRDFQGVSKKAFDGRGNYTLGVKEQLIFPEIDYDKVSKVRGMDIVIVTTANTDEEARELLANFGMPFRK</sequence>
<accession>A7X5E5</accession>
<dbReference type="EMBL" id="AP009324">
    <property type="protein sequence ID" value="BAF79105.1"/>
    <property type="molecule type" value="Genomic_DNA"/>
</dbReference>
<dbReference type="RefSeq" id="WP_001080824.1">
    <property type="nucleotide sequence ID" value="NZ_CTYB01000025.1"/>
</dbReference>
<dbReference type="SMR" id="A7X5E5"/>
<dbReference type="KEGG" id="saw:SAHV_2222"/>
<dbReference type="HOGENOM" id="CLU_061015_2_1_9"/>
<dbReference type="GO" id="GO:1990904">
    <property type="term" value="C:ribonucleoprotein complex"/>
    <property type="evidence" value="ECO:0007669"/>
    <property type="project" value="UniProtKB-KW"/>
</dbReference>
<dbReference type="GO" id="GO:0005840">
    <property type="term" value="C:ribosome"/>
    <property type="evidence" value="ECO:0007669"/>
    <property type="project" value="UniProtKB-KW"/>
</dbReference>
<dbReference type="GO" id="GO:0019843">
    <property type="term" value="F:rRNA binding"/>
    <property type="evidence" value="ECO:0007669"/>
    <property type="project" value="UniProtKB-UniRule"/>
</dbReference>
<dbReference type="GO" id="GO:0003735">
    <property type="term" value="F:structural constituent of ribosome"/>
    <property type="evidence" value="ECO:0007669"/>
    <property type="project" value="InterPro"/>
</dbReference>
<dbReference type="GO" id="GO:0000049">
    <property type="term" value="F:tRNA binding"/>
    <property type="evidence" value="ECO:0007669"/>
    <property type="project" value="UniProtKB-UniRule"/>
</dbReference>
<dbReference type="GO" id="GO:0006412">
    <property type="term" value="P:translation"/>
    <property type="evidence" value="ECO:0007669"/>
    <property type="project" value="UniProtKB-UniRule"/>
</dbReference>
<dbReference type="FunFam" id="3.30.1440.10:FF:000001">
    <property type="entry name" value="50S ribosomal protein L5"/>
    <property type="match status" value="1"/>
</dbReference>
<dbReference type="Gene3D" id="3.30.1440.10">
    <property type="match status" value="1"/>
</dbReference>
<dbReference type="HAMAP" id="MF_01333_B">
    <property type="entry name" value="Ribosomal_uL5_B"/>
    <property type="match status" value="1"/>
</dbReference>
<dbReference type="InterPro" id="IPR002132">
    <property type="entry name" value="Ribosomal_uL5"/>
</dbReference>
<dbReference type="InterPro" id="IPR020930">
    <property type="entry name" value="Ribosomal_uL5_bac-type"/>
</dbReference>
<dbReference type="InterPro" id="IPR031309">
    <property type="entry name" value="Ribosomal_uL5_C"/>
</dbReference>
<dbReference type="InterPro" id="IPR020929">
    <property type="entry name" value="Ribosomal_uL5_CS"/>
</dbReference>
<dbReference type="InterPro" id="IPR022803">
    <property type="entry name" value="Ribosomal_uL5_dom_sf"/>
</dbReference>
<dbReference type="InterPro" id="IPR031310">
    <property type="entry name" value="Ribosomal_uL5_N"/>
</dbReference>
<dbReference type="NCBIfam" id="NF000585">
    <property type="entry name" value="PRK00010.1"/>
    <property type="match status" value="1"/>
</dbReference>
<dbReference type="PANTHER" id="PTHR11994">
    <property type="entry name" value="60S RIBOSOMAL PROTEIN L11-RELATED"/>
    <property type="match status" value="1"/>
</dbReference>
<dbReference type="Pfam" id="PF00281">
    <property type="entry name" value="Ribosomal_L5"/>
    <property type="match status" value="1"/>
</dbReference>
<dbReference type="Pfam" id="PF00673">
    <property type="entry name" value="Ribosomal_L5_C"/>
    <property type="match status" value="1"/>
</dbReference>
<dbReference type="PIRSF" id="PIRSF002161">
    <property type="entry name" value="Ribosomal_L5"/>
    <property type="match status" value="1"/>
</dbReference>
<dbReference type="SUPFAM" id="SSF55282">
    <property type="entry name" value="RL5-like"/>
    <property type="match status" value="1"/>
</dbReference>
<dbReference type="PROSITE" id="PS00358">
    <property type="entry name" value="RIBOSOMAL_L5"/>
    <property type="match status" value="1"/>
</dbReference>
<keyword id="KW-0687">Ribonucleoprotein</keyword>
<keyword id="KW-0689">Ribosomal protein</keyword>
<keyword id="KW-0694">RNA-binding</keyword>
<keyword id="KW-0699">rRNA-binding</keyword>
<keyword id="KW-0820">tRNA-binding</keyword>
<organism>
    <name type="scientific">Staphylococcus aureus (strain Mu3 / ATCC 700698)</name>
    <dbReference type="NCBI Taxonomy" id="418127"/>
    <lineage>
        <taxon>Bacteria</taxon>
        <taxon>Bacillati</taxon>
        <taxon>Bacillota</taxon>
        <taxon>Bacilli</taxon>
        <taxon>Bacillales</taxon>
        <taxon>Staphylococcaceae</taxon>
        <taxon>Staphylococcus</taxon>
    </lineage>
</organism>
<name>RL5_STAA1</name>
<reference key="1">
    <citation type="journal article" date="2008" name="Antimicrob. Agents Chemother.">
        <title>Mutated response regulator graR is responsible for phenotypic conversion of Staphylococcus aureus from heterogeneous vancomycin-intermediate resistance to vancomycin-intermediate resistance.</title>
        <authorList>
            <person name="Neoh H.-M."/>
            <person name="Cui L."/>
            <person name="Yuzawa H."/>
            <person name="Takeuchi F."/>
            <person name="Matsuo M."/>
            <person name="Hiramatsu K."/>
        </authorList>
    </citation>
    <scope>NUCLEOTIDE SEQUENCE [LARGE SCALE GENOMIC DNA]</scope>
    <source>
        <strain>Mu3 / ATCC 700698</strain>
    </source>
</reference>
<proteinExistence type="inferred from homology"/>